<name>GUAA_STRP6</name>
<proteinExistence type="inferred from homology"/>
<accession>Q5XC20</accession>
<comment type="function">
    <text evidence="1">Catalyzes the synthesis of GMP from XMP.</text>
</comment>
<comment type="catalytic activity">
    <reaction evidence="1">
        <text>XMP + L-glutamine + ATP + H2O = GMP + L-glutamate + AMP + diphosphate + 2 H(+)</text>
        <dbReference type="Rhea" id="RHEA:11680"/>
        <dbReference type="ChEBI" id="CHEBI:15377"/>
        <dbReference type="ChEBI" id="CHEBI:15378"/>
        <dbReference type="ChEBI" id="CHEBI:29985"/>
        <dbReference type="ChEBI" id="CHEBI:30616"/>
        <dbReference type="ChEBI" id="CHEBI:33019"/>
        <dbReference type="ChEBI" id="CHEBI:57464"/>
        <dbReference type="ChEBI" id="CHEBI:58115"/>
        <dbReference type="ChEBI" id="CHEBI:58359"/>
        <dbReference type="ChEBI" id="CHEBI:456215"/>
        <dbReference type="EC" id="6.3.5.2"/>
    </reaction>
</comment>
<comment type="pathway">
    <text evidence="1">Purine metabolism; GMP biosynthesis; GMP from XMP (L-Gln route): step 1/1.</text>
</comment>
<comment type="subunit">
    <text evidence="1">Homodimer.</text>
</comment>
<feature type="chain" id="PRO_0000140192" description="GMP synthase [glutamine-hydrolyzing]">
    <location>
        <begin position="1"/>
        <end position="520"/>
    </location>
</feature>
<feature type="domain" description="Glutamine amidotransferase type-1" evidence="1">
    <location>
        <begin position="12"/>
        <end position="205"/>
    </location>
</feature>
<feature type="domain" description="GMPS ATP-PPase" evidence="1">
    <location>
        <begin position="206"/>
        <end position="395"/>
    </location>
</feature>
<feature type="active site" description="Nucleophile" evidence="1">
    <location>
        <position position="89"/>
    </location>
</feature>
<feature type="active site" evidence="1">
    <location>
        <position position="179"/>
    </location>
</feature>
<feature type="active site" evidence="1">
    <location>
        <position position="181"/>
    </location>
</feature>
<feature type="binding site" evidence="1">
    <location>
        <begin position="233"/>
        <end position="239"/>
    </location>
    <ligand>
        <name>ATP</name>
        <dbReference type="ChEBI" id="CHEBI:30616"/>
    </ligand>
</feature>
<dbReference type="EC" id="6.3.5.2" evidence="1"/>
<dbReference type="EMBL" id="CP000003">
    <property type="protein sequence ID" value="AAT87043.1"/>
    <property type="molecule type" value="Genomic_DNA"/>
</dbReference>
<dbReference type="RefSeq" id="WP_011184537.1">
    <property type="nucleotide sequence ID" value="NC_006086.1"/>
</dbReference>
<dbReference type="SMR" id="Q5XC20"/>
<dbReference type="MEROPS" id="C26.957"/>
<dbReference type="KEGG" id="spa:M6_Spy0908"/>
<dbReference type="HOGENOM" id="CLU_014340_0_5_9"/>
<dbReference type="UniPathway" id="UPA00189">
    <property type="reaction ID" value="UER00296"/>
</dbReference>
<dbReference type="Proteomes" id="UP000001167">
    <property type="component" value="Chromosome"/>
</dbReference>
<dbReference type="GO" id="GO:0005829">
    <property type="term" value="C:cytosol"/>
    <property type="evidence" value="ECO:0007669"/>
    <property type="project" value="TreeGrafter"/>
</dbReference>
<dbReference type="GO" id="GO:0005524">
    <property type="term" value="F:ATP binding"/>
    <property type="evidence" value="ECO:0007669"/>
    <property type="project" value="UniProtKB-UniRule"/>
</dbReference>
<dbReference type="GO" id="GO:0003921">
    <property type="term" value="F:GMP synthase activity"/>
    <property type="evidence" value="ECO:0007669"/>
    <property type="project" value="InterPro"/>
</dbReference>
<dbReference type="CDD" id="cd01742">
    <property type="entry name" value="GATase1_GMP_Synthase"/>
    <property type="match status" value="1"/>
</dbReference>
<dbReference type="CDD" id="cd01997">
    <property type="entry name" value="GMP_synthase_C"/>
    <property type="match status" value="1"/>
</dbReference>
<dbReference type="FunFam" id="3.30.300.10:FF:000002">
    <property type="entry name" value="GMP synthase [glutamine-hydrolyzing]"/>
    <property type="match status" value="1"/>
</dbReference>
<dbReference type="FunFam" id="3.40.50.620:FF:000001">
    <property type="entry name" value="GMP synthase [glutamine-hydrolyzing]"/>
    <property type="match status" value="1"/>
</dbReference>
<dbReference type="FunFam" id="3.40.50.880:FF:000001">
    <property type="entry name" value="GMP synthase [glutamine-hydrolyzing]"/>
    <property type="match status" value="1"/>
</dbReference>
<dbReference type="Gene3D" id="3.30.300.10">
    <property type="match status" value="1"/>
</dbReference>
<dbReference type="Gene3D" id="3.40.50.880">
    <property type="match status" value="1"/>
</dbReference>
<dbReference type="Gene3D" id="3.40.50.620">
    <property type="entry name" value="HUPs"/>
    <property type="match status" value="1"/>
</dbReference>
<dbReference type="HAMAP" id="MF_00344">
    <property type="entry name" value="GMP_synthase"/>
    <property type="match status" value="1"/>
</dbReference>
<dbReference type="InterPro" id="IPR029062">
    <property type="entry name" value="Class_I_gatase-like"/>
</dbReference>
<dbReference type="InterPro" id="IPR017926">
    <property type="entry name" value="GATASE"/>
</dbReference>
<dbReference type="InterPro" id="IPR001674">
    <property type="entry name" value="GMP_synth_C"/>
</dbReference>
<dbReference type="InterPro" id="IPR004739">
    <property type="entry name" value="GMP_synth_GATase"/>
</dbReference>
<dbReference type="InterPro" id="IPR022955">
    <property type="entry name" value="GMP_synthase"/>
</dbReference>
<dbReference type="InterPro" id="IPR025777">
    <property type="entry name" value="GMPS_ATP_PPase_dom"/>
</dbReference>
<dbReference type="InterPro" id="IPR022310">
    <property type="entry name" value="NAD/GMP_synthase"/>
</dbReference>
<dbReference type="InterPro" id="IPR014729">
    <property type="entry name" value="Rossmann-like_a/b/a_fold"/>
</dbReference>
<dbReference type="NCBIfam" id="TIGR00884">
    <property type="entry name" value="guaA_Cterm"/>
    <property type="match status" value="1"/>
</dbReference>
<dbReference type="NCBIfam" id="TIGR00888">
    <property type="entry name" value="guaA_Nterm"/>
    <property type="match status" value="1"/>
</dbReference>
<dbReference type="NCBIfam" id="NF000848">
    <property type="entry name" value="PRK00074.1"/>
    <property type="match status" value="1"/>
</dbReference>
<dbReference type="PANTHER" id="PTHR11922:SF2">
    <property type="entry name" value="GMP SYNTHASE [GLUTAMINE-HYDROLYZING]"/>
    <property type="match status" value="1"/>
</dbReference>
<dbReference type="PANTHER" id="PTHR11922">
    <property type="entry name" value="GMP SYNTHASE-RELATED"/>
    <property type="match status" value="1"/>
</dbReference>
<dbReference type="Pfam" id="PF00117">
    <property type="entry name" value="GATase"/>
    <property type="match status" value="1"/>
</dbReference>
<dbReference type="Pfam" id="PF00958">
    <property type="entry name" value="GMP_synt_C"/>
    <property type="match status" value="1"/>
</dbReference>
<dbReference type="Pfam" id="PF02540">
    <property type="entry name" value="NAD_synthase"/>
    <property type="match status" value="1"/>
</dbReference>
<dbReference type="PRINTS" id="PR00097">
    <property type="entry name" value="ANTSNTHASEII"/>
</dbReference>
<dbReference type="PRINTS" id="PR00099">
    <property type="entry name" value="CPSGATASE"/>
</dbReference>
<dbReference type="PRINTS" id="PR00096">
    <property type="entry name" value="GATASE"/>
</dbReference>
<dbReference type="SUPFAM" id="SSF52402">
    <property type="entry name" value="Adenine nucleotide alpha hydrolases-like"/>
    <property type="match status" value="1"/>
</dbReference>
<dbReference type="SUPFAM" id="SSF52317">
    <property type="entry name" value="Class I glutamine amidotransferase-like"/>
    <property type="match status" value="1"/>
</dbReference>
<dbReference type="SUPFAM" id="SSF54810">
    <property type="entry name" value="GMP synthetase C-terminal dimerisation domain"/>
    <property type="match status" value="1"/>
</dbReference>
<dbReference type="PROSITE" id="PS51273">
    <property type="entry name" value="GATASE_TYPE_1"/>
    <property type="match status" value="1"/>
</dbReference>
<dbReference type="PROSITE" id="PS51553">
    <property type="entry name" value="GMPS_ATP_PPASE"/>
    <property type="match status" value="1"/>
</dbReference>
<keyword id="KW-0067">ATP-binding</keyword>
<keyword id="KW-0315">Glutamine amidotransferase</keyword>
<keyword id="KW-0332">GMP biosynthesis</keyword>
<keyword id="KW-0436">Ligase</keyword>
<keyword id="KW-0547">Nucleotide-binding</keyword>
<keyword id="KW-0658">Purine biosynthesis</keyword>
<sequence>MTEISILNDVQKIIVLDYGSQYNQLIARRIREFGVFSELKSHKITAQELREINPIGIVLSGGPNSVYADNAFGIDPEIFELGIPILGICYGMQLITHKLGGKVVPAGQAGNREYGQSTLHLRETSKLFSGTPQEQLVLMSHGDAVTEIPEGFHLVGDSNDCPYAAIENTEKNLYGIQFHPEVRHSVYGNDILKNFAISICGARGDWSMDNFIDMEIAKIRETVGDRKVLLGLSGGVDSSVVGVLLQKAIGDQLTCIFVDHGLLRKDEGDQVMGMLGGKFGLNIIRVDASKRFLDLLADVEDPEKKRKIIGNEFVYVFDDEASKLKGVDFLAQGTLYTDIIESGTETAQTIKSHHNVGGLPEDMQFELIEPLNTLFKDEVRALGIALGMPEEIVWRQPFPGPGLAIRVMGPITEEKLETVRESDAILREEIAKAGLDRDVWQYFTVNTGVRSVGVMGDGRTYDYTIAIRAITSIDGMTADFAQLPWDVLKKISTRIVNEVDHVNRIVYDITSKPPATVEWE</sequence>
<gene>
    <name evidence="1" type="primary">guaA</name>
    <name type="ordered locus">M6_Spy0908</name>
</gene>
<protein>
    <recommendedName>
        <fullName evidence="1">GMP synthase [glutamine-hydrolyzing]</fullName>
        <ecNumber evidence="1">6.3.5.2</ecNumber>
    </recommendedName>
    <alternativeName>
        <fullName evidence="1">GMP synthetase</fullName>
    </alternativeName>
    <alternativeName>
        <fullName evidence="1">Glutamine amidotransferase</fullName>
    </alternativeName>
</protein>
<reference key="1">
    <citation type="journal article" date="2004" name="J. Infect. Dis.">
        <title>Progress toward characterization of the group A Streptococcus metagenome: complete genome sequence of a macrolide-resistant serotype M6 strain.</title>
        <authorList>
            <person name="Banks D.J."/>
            <person name="Porcella S.F."/>
            <person name="Barbian K.D."/>
            <person name="Beres S.B."/>
            <person name="Philips L.E."/>
            <person name="Voyich J.M."/>
            <person name="DeLeo F.R."/>
            <person name="Martin J.M."/>
            <person name="Somerville G.A."/>
            <person name="Musser J.M."/>
        </authorList>
    </citation>
    <scope>NUCLEOTIDE SEQUENCE [LARGE SCALE GENOMIC DNA]</scope>
    <source>
        <strain>ATCC BAA-946 / MGAS10394</strain>
    </source>
</reference>
<evidence type="ECO:0000255" key="1">
    <source>
        <dbReference type="HAMAP-Rule" id="MF_00344"/>
    </source>
</evidence>
<organism>
    <name type="scientific">Streptococcus pyogenes serotype M6 (strain ATCC BAA-946 / MGAS10394)</name>
    <dbReference type="NCBI Taxonomy" id="286636"/>
    <lineage>
        <taxon>Bacteria</taxon>
        <taxon>Bacillati</taxon>
        <taxon>Bacillota</taxon>
        <taxon>Bacilli</taxon>
        <taxon>Lactobacillales</taxon>
        <taxon>Streptococcaceae</taxon>
        <taxon>Streptococcus</taxon>
    </lineage>
</organism>